<name>RL2_STRCU</name>
<organism>
    <name type="scientific">Streptomyces collinus</name>
    <dbReference type="NCBI Taxonomy" id="42684"/>
    <lineage>
        <taxon>Bacteria</taxon>
        <taxon>Bacillati</taxon>
        <taxon>Actinomycetota</taxon>
        <taxon>Actinomycetes</taxon>
        <taxon>Kitasatosporales</taxon>
        <taxon>Streptomycetaceae</taxon>
        <taxon>Streptomyces</taxon>
    </lineage>
</organism>
<evidence type="ECO:0000255" key="1">
    <source>
        <dbReference type="HAMAP-Rule" id="MF_01320"/>
    </source>
</evidence>
<evidence type="ECO:0000256" key="2">
    <source>
        <dbReference type="SAM" id="MobiDB-lite"/>
    </source>
</evidence>
<evidence type="ECO:0000269" key="3">
    <source>
    </source>
</evidence>
<evidence type="ECO:0000305" key="4"/>
<dbReference type="EMBL" id="AF324467">
    <property type="protein sequence ID" value="AAK01662.2"/>
    <property type="molecule type" value="Genomic_DNA"/>
</dbReference>
<dbReference type="SMR" id="Q9AMK8"/>
<dbReference type="GO" id="GO:0015934">
    <property type="term" value="C:large ribosomal subunit"/>
    <property type="evidence" value="ECO:0000314"/>
    <property type="project" value="UniProtKB"/>
</dbReference>
<dbReference type="GO" id="GO:0019843">
    <property type="term" value="F:rRNA binding"/>
    <property type="evidence" value="ECO:0007669"/>
    <property type="project" value="UniProtKB-UniRule"/>
</dbReference>
<dbReference type="GO" id="GO:0003735">
    <property type="term" value="F:structural constituent of ribosome"/>
    <property type="evidence" value="ECO:0000314"/>
    <property type="project" value="UniProtKB"/>
</dbReference>
<dbReference type="GO" id="GO:0016740">
    <property type="term" value="F:transferase activity"/>
    <property type="evidence" value="ECO:0007669"/>
    <property type="project" value="InterPro"/>
</dbReference>
<dbReference type="GO" id="GO:0002181">
    <property type="term" value="P:cytoplasmic translation"/>
    <property type="evidence" value="ECO:0007669"/>
    <property type="project" value="TreeGrafter"/>
</dbReference>
<dbReference type="GO" id="GO:0006412">
    <property type="term" value="P:translation"/>
    <property type="evidence" value="ECO:0000314"/>
    <property type="project" value="UniProtKB"/>
</dbReference>
<dbReference type="FunFam" id="2.30.30.30:FF:000001">
    <property type="entry name" value="50S ribosomal protein L2"/>
    <property type="match status" value="1"/>
</dbReference>
<dbReference type="FunFam" id="2.40.50.140:FF:000003">
    <property type="entry name" value="50S ribosomal protein L2"/>
    <property type="match status" value="1"/>
</dbReference>
<dbReference type="FunFam" id="4.10.950.10:FF:000001">
    <property type="entry name" value="50S ribosomal protein L2"/>
    <property type="match status" value="1"/>
</dbReference>
<dbReference type="Gene3D" id="2.30.30.30">
    <property type="match status" value="1"/>
</dbReference>
<dbReference type="Gene3D" id="2.40.50.140">
    <property type="entry name" value="Nucleic acid-binding proteins"/>
    <property type="match status" value="1"/>
</dbReference>
<dbReference type="Gene3D" id="4.10.950.10">
    <property type="entry name" value="Ribosomal protein L2, domain 3"/>
    <property type="match status" value="1"/>
</dbReference>
<dbReference type="HAMAP" id="MF_01320_B">
    <property type="entry name" value="Ribosomal_uL2_B"/>
    <property type="match status" value="1"/>
</dbReference>
<dbReference type="InterPro" id="IPR012340">
    <property type="entry name" value="NA-bd_OB-fold"/>
</dbReference>
<dbReference type="InterPro" id="IPR014722">
    <property type="entry name" value="Rib_uL2_dom2"/>
</dbReference>
<dbReference type="InterPro" id="IPR002171">
    <property type="entry name" value="Ribosomal_uL2"/>
</dbReference>
<dbReference type="InterPro" id="IPR005880">
    <property type="entry name" value="Ribosomal_uL2_bac/org-type"/>
</dbReference>
<dbReference type="InterPro" id="IPR022669">
    <property type="entry name" value="Ribosomal_uL2_C"/>
</dbReference>
<dbReference type="InterPro" id="IPR022671">
    <property type="entry name" value="Ribosomal_uL2_CS"/>
</dbReference>
<dbReference type="InterPro" id="IPR014726">
    <property type="entry name" value="Ribosomal_uL2_dom3"/>
</dbReference>
<dbReference type="InterPro" id="IPR022666">
    <property type="entry name" value="Ribosomal_uL2_RNA-bd_dom"/>
</dbReference>
<dbReference type="InterPro" id="IPR008991">
    <property type="entry name" value="Translation_prot_SH3-like_sf"/>
</dbReference>
<dbReference type="NCBIfam" id="TIGR01171">
    <property type="entry name" value="rplB_bact"/>
    <property type="match status" value="1"/>
</dbReference>
<dbReference type="PANTHER" id="PTHR13691:SF5">
    <property type="entry name" value="LARGE RIBOSOMAL SUBUNIT PROTEIN UL2M"/>
    <property type="match status" value="1"/>
</dbReference>
<dbReference type="PANTHER" id="PTHR13691">
    <property type="entry name" value="RIBOSOMAL PROTEIN L2"/>
    <property type="match status" value="1"/>
</dbReference>
<dbReference type="Pfam" id="PF00181">
    <property type="entry name" value="Ribosomal_L2"/>
    <property type="match status" value="1"/>
</dbReference>
<dbReference type="Pfam" id="PF03947">
    <property type="entry name" value="Ribosomal_L2_C"/>
    <property type="match status" value="1"/>
</dbReference>
<dbReference type="PIRSF" id="PIRSF002158">
    <property type="entry name" value="Ribosomal_L2"/>
    <property type="match status" value="1"/>
</dbReference>
<dbReference type="SMART" id="SM01383">
    <property type="entry name" value="Ribosomal_L2"/>
    <property type="match status" value="1"/>
</dbReference>
<dbReference type="SMART" id="SM01382">
    <property type="entry name" value="Ribosomal_L2_C"/>
    <property type="match status" value="1"/>
</dbReference>
<dbReference type="SUPFAM" id="SSF50249">
    <property type="entry name" value="Nucleic acid-binding proteins"/>
    <property type="match status" value="1"/>
</dbReference>
<dbReference type="SUPFAM" id="SSF50104">
    <property type="entry name" value="Translation proteins SH3-like domain"/>
    <property type="match status" value="1"/>
</dbReference>
<dbReference type="PROSITE" id="PS00467">
    <property type="entry name" value="RIBOSOMAL_L2"/>
    <property type="match status" value="1"/>
</dbReference>
<gene>
    <name evidence="1" type="primary">rplB</name>
</gene>
<feature type="chain" id="PRO_0000129626" description="Large ribosomal subunit protein uL2">
    <location>
        <begin position="1"/>
        <end position="278"/>
    </location>
</feature>
<feature type="region of interest" description="Disordered" evidence="2">
    <location>
        <begin position="29"/>
        <end position="55"/>
    </location>
</feature>
<feature type="region of interest" description="Disordered" evidence="2">
    <location>
        <begin position="225"/>
        <end position="278"/>
    </location>
</feature>
<feature type="compositionally biased region" description="Basic residues" evidence="2">
    <location>
        <begin position="258"/>
        <end position="278"/>
    </location>
</feature>
<feature type="sequence conflict" description="In Ref. 2; AA sequence." evidence="4" ref="2">
    <original>K</original>
    <variation>G</variation>
    <location>
        <position position="154"/>
    </location>
</feature>
<accession>Q9AMK8</accession>
<comment type="function">
    <text evidence="1">One of the primary rRNA binding proteins. Required for association of the 30S and 50S subunits to form the 70S ribosome, for tRNA binding and peptide bond formation. It has been suggested to have peptidyltransferase activity; this is somewhat controversial. Makes several contacts with the 16S rRNA in the 70S ribosome.</text>
</comment>
<comment type="subunit">
    <text evidence="1">Part of the 50S ribosomal subunit. Forms a bridge to the 30S subunit in the 70S ribosome.</text>
</comment>
<comment type="PTM">
    <text>The N-terminus is blocked.</text>
</comment>
<comment type="PTM">
    <text evidence="3">Phosphorylated on serine and threonine residues.</text>
</comment>
<comment type="similarity">
    <text evidence="1">Belongs to the universal ribosomal protein uL2 family.</text>
</comment>
<proteinExistence type="evidence at protein level"/>
<sequence>MAIRKYKPTTPGRRGASVADFVEVTRSTPEKSLVRPLHSKGGRNNAGRITVRHQGGGHKRAYRIVDFRRHDKDGVPAKVAHIEYDPNRSARIALLHYADGEKRYILAPRNLQQGDRVENGPGADIKPGNNLALRNIPVGTTIHAIELRPGGGAKFARSAGASVQLLAKEGAYAHLRMPSGEIRLVNVRCRATIGEVGNAEQSNINWGKAGRKRWLGVRPTVRGVVMNPVDHPHGGGEGRTSGGRHPVSPWGKPTGRTRSNKKASNKYIVRRRTKNKKR</sequence>
<reference key="1">
    <citation type="journal article" date="2001" name="Biochem. Biophys. Res. Commun.">
        <title>Characterization of the rplB gene from Streptomyces collinus and its protein product by mass spectrometry.</title>
        <authorList>
            <person name="Mikulik K."/>
            <person name="Man P."/>
            <person name="Halada P."/>
        </authorList>
    </citation>
    <scope>NUCLEOTIDE SEQUENCE [GENOMIC DNA]</scope>
    <scope>PROTEIN SEQUENCE OF 5-26; 32-40; 53-88; 92-154; 158-188; 191-208; 214-239; 245-252 AND 267-270</scope>
</reference>
<reference key="2">
    <citation type="journal article" date="1997" name="Biochem. Biophys. Res. Commun.">
        <title>Protein kinase associated with ribosomes phosphorylates ribosomal proteins of Streptomyces collinus.</title>
        <authorList>
            <person name="Mikulik K."/>
            <person name="Janda I."/>
        </authorList>
    </citation>
    <scope>PROTEIN SEQUENCE OF 15-26; 92-102 AND 135-154</scope>
    <scope>PHOSPHORYLATION</scope>
</reference>
<keyword id="KW-0903">Direct protein sequencing</keyword>
<keyword id="KW-0687">Ribonucleoprotein</keyword>
<keyword id="KW-0689">Ribosomal protein</keyword>
<keyword id="KW-0694">RNA-binding</keyword>
<keyword id="KW-0699">rRNA-binding</keyword>
<protein>
    <recommendedName>
        <fullName evidence="1">Large ribosomal subunit protein uL2</fullName>
    </recommendedName>
    <alternativeName>
        <fullName evidence="4">50S ribosomal protein L2</fullName>
    </alternativeName>
</protein>